<comment type="function">
    <text evidence="1">Glucosidase involved in the degradation of cellulosic biomass. Active on lichenan (By similarity).</text>
</comment>
<comment type="catalytic activity">
    <reaction>
        <text>Successive hydrolysis of beta-D-glucose units from the non-reducing ends of (1-&gt;3)-beta-D-glucans, releasing alpha-glucose.</text>
        <dbReference type="EC" id="3.2.1.58"/>
    </reaction>
</comment>
<comment type="subcellular location">
    <subcellularLocation>
        <location evidence="4">Cell membrane</location>
        <topology evidence="4">Single-pass type II membrane protein</topology>
    </subcellularLocation>
</comment>
<comment type="similarity">
    <text evidence="4">Belongs to the glycosyl hydrolase 5 (cellulase A) family.</text>
</comment>
<sequence length="833" mass="94775">MPTHSRSRDRYGGRDSDREARYDYDYARRRYATDDDDDYDDDELEHDLTERRYRRDGYRPPRESRARGYYERDAEGAADEELLGNERDPGPRASRSYGDDYDARRREHSRAREAPRRSERHRDRDREGRSRRRAYEDDGRHRTRDGRRDRGRESDGEARRSRRREAGRETAARKHRSSDSTNSASHLLSADALAKLGAQYEKEERRKREIAKDAAKAERKRQKKLAVVGEETRALRDPPGESHRDRTKARVASGAYLEEGRSPEMRVRHRGGGGPAMEARWRKEGSWGGTMDDSGGGRPFWKRKRWIGLGALIIILVIVIPVAVVVSKKHDNKSDPADSQGTSPGKSNLDGLSHDSIPAYAQGTYLDPWTWYDTTDFNVTFTNETVGGLSIMGLNSTWDDSARPNDNVPPLNEPFPYGSQPIRGVNLGGWLSIEPFIVPSLFDSYSSVSGIIDEWTLSKRLGSSAASTLEKHYATFITEQDFADIRDAGLDHVRIQYSYWAVATYDDDPYVAKISWRYLLRAIEYCRKYGLRVNLDPHGIPGSQNGWNHSGREGVIGWLNGTDGELNRNRSLAVHDSVSKFFAQDRYKNIVTIYGLVNEPLMLSLSIEDVLDWTTEATKLVQKNGITAYVALHDGFLNLSKWKSMLKNRPDKMLLDTHQYTIFNTGQIGLNHTAKVNLICNDWYNMIKEINSTSTGWGPTICGEWSQADTDCAKYLNNVGRGTRWEGTFSLTDSTQYCPTADTGPPCSCANANADVSKYSADYKKFLQTYAEAQMSAFETGQGWFYWTWRTESAAQWSYRTAWKNGFMPAKAYAPSFRCGDAVPDFGDLPEYY</sequence>
<keyword id="KW-0119">Carbohydrate metabolism</keyword>
<keyword id="KW-1003">Cell membrane</keyword>
<keyword id="KW-0961">Cell wall biogenesis/degradation</keyword>
<keyword id="KW-0325">Glycoprotein</keyword>
<keyword id="KW-0326">Glycosidase</keyword>
<keyword id="KW-0378">Hydrolase</keyword>
<keyword id="KW-0472">Membrane</keyword>
<keyword id="KW-0624">Polysaccharide degradation</keyword>
<keyword id="KW-0735">Signal-anchor</keyword>
<keyword id="KW-0812">Transmembrane</keyword>
<keyword id="KW-1133">Transmembrane helix</keyword>
<evidence type="ECO:0000250" key="1"/>
<evidence type="ECO:0000255" key="2"/>
<evidence type="ECO:0000256" key="3">
    <source>
        <dbReference type="SAM" id="MobiDB-lite"/>
    </source>
</evidence>
<evidence type="ECO:0000305" key="4"/>
<accession>B0Y7W2</accession>
<protein>
    <recommendedName>
        <fullName>Probable glucan 1,3-beta-glucosidase D</fullName>
        <ecNumber>3.2.1.58</ecNumber>
    </recommendedName>
    <alternativeName>
        <fullName>Exo-1,3-beta-glucanase D</fullName>
    </alternativeName>
</protein>
<organism>
    <name type="scientific">Aspergillus fumigatus (strain CBS 144.89 / FGSC A1163 / CEA10)</name>
    <name type="common">Neosartorya fumigata</name>
    <dbReference type="NCBI Taxonomy" id="451804"/>
    <lineage>
        <taxon>Eukaryota</taxon>
        <taxon>Fungi</taxon>
        <taxon>Dikarya</taxon>
        <taxon>Ascomycota</taxon>
        <taxon>Pezizomycotina</taxon>
        <taxon>Eurotiomycetes</taxon>
        <taxon>Eurotiomycetidae</taxon>
        <taxon>Eurotiales</taxon>
        <taxon>Aspergillaceae</taxon>
        <taxon>Aspergillus</taxon>
        <taxon>Aspergillus subgen. Fumigati</taxon>
    </lineage>
</organism>
<feature type="chain" id="PRO_0000395162" description="Probable glucan 1,3-beta-glucosidase D">
    <location>
        <begin position="1"/>
        <end position="833"/>
    </location>
</feature>
<feature type="topological domain" description="Cytoplasmic" evidence="2">
    <location>
        <begin position="1"/>
        <end position="305"/>
    </location>
</feature>
<feature type="transmembrane region" description="Helical; Signal-anchor for type II membrane protein" evidence="2">
    <location>
        <begin position="306"/>
        <end position="326"/>
    </location>
</feature>
<feature type="topological domain" description="Extracellular" evidence="2">
    <location>
        <begin position="327"/>
        <end position="833"/>
    </location>
</feature>
<feature type="region of interest" description="Disordered" evidence="3">
    <location>
        <begin position="1"/>
        <end position="228"/>
    </location>
</feature>
<feature type="region of interest" description="Disordered" evidence="3">
    <location>
        <begin position="331"/>
        <end position="353"/>
    </location>
</feature>
<feature type="compositionally biased region" description="Basic and acidic residues" evidence="3">
    <location>
        <begin position="1"/>
        <end position="33"/>
    </location>
</feature>
<feature type="compositionally biased region" description="Acidic residues" evidence="3">
    <location>
        <begin position="34"/>
        <end position="45"/>
    </location>
</feature>
<feature type="compositionally biased region" description="Basic and acidic residues" evidence="3">
    <location>
        <begin position="46"/>
        <end position="75"/>
    </location>
</feature>
<feature type="compositionally biased region" description="Basic and acidic residues" evidence="3">
    <location>
        <begin position="97"/>
        <end position="172"/>
    </location>
</feature>
<feature type="compositionally biased region" description="Low complexity" evidence="3">
    <location>
        <begin position="183"/>
        <end position="196"/>
    </location>
</feature>
<feature type="compositionally biased region" description="Basic and acidic residues" evidence="3">
    <location>
        <begin position="200"/>
        <end position="217"/>
    </location>
</feature>
<feature type="compositionally biased region" description="Polar residues" evidence="3">
    <location>
        <begin position="337"/>
        <end position="346"/>
    </location>
</feature>
<feature type="active site" description="Proton donor" evidence="1">
    <location>
        <position position="599"/>
    </location>
</feature>
<feature type="active site" description="Nucleophile" evidence="1">
    <location>
        <position position="704"/>
    </location>
</feature>
<feature type="glycosylation site" description="N-linked (GlcNAc...) asparagine" evidence="2">
    <location>
        <position position="332"/>
    </location>
</feature>
<feature type="glycosylation site" description="N-linked (GlcNAc...) asparagine" evidence="2">
    <location>
        <position position="378"/>
    </location>
</feature>
<feature type="glycosylation site" description="N-linked (GlcNAc...) asparagine" evidence="2">
    <location>
        <position position="383"/>
    </location>
</feature>
<feature type="glycosylation site" description="N-linked (GlcNAc...) asparagine" evidence="2">
    <location>
        <position position="395"/>
    </location>
</feature>
<feature type="glycosylation site" description="N-linked (GlcNAc...) asparagine" evidence="2">
    <location>
        <position position="548"/>
    </location>
</feature>
<feature type="glycosylation site" description="N-linked (GlcNAc...) asparagine" evidence="2">
    <location>
        <position position="560"/>
    </location>
</feature>
<feature type="glycosylation site" description="N-linked (GlcNAc...) asparagine" evidence="2">
    <location>
        <position position="569"/>
    </location>
</feature>
<feature type="glycosylation site" description="N-linked (GlcNAc...) asparagine" evidence="2">
    <location>
        <position position="638"/>
    </location>
</feature>
<feature type="glycosylation site" description="N-linked (GlcNAc...) asparagine" evidence="2">
    <location>
        <position position="671"/>
    </location>
</feature>
<feature type="glycosylation site" description="N-linked (GlcNAc...) asparagine" evidence="2">
    <location>
        <position position="691"/>
    </location>
</feature>
<name>EXGD_ASPFC</name>
<dbReference type="EC" id="3.2.1.58"/>
<dbReference type="EMBL" id="DS499599">
    <property type="protein sequence ID" value="EDP49493.1"/>
    <property type="molecule type" value="Genomic_DNA"/>
</dbReference>
<dbReference type="SMR" id="B0Y7W2"/>
<dbReference type="GlyCosmos" id="B0Y7W2">
    <property type="glycosylation" value="10 sites, No reported glycans"/>
</dbReference>
<dbReference type="EnsemblFungi" id="EDP49493">
    <property type="protein sequence ID" value="EDP49493"/>
    <property type="gene ID" value="AFUB_075220"/>
</dbReference>
<dbReference type="VEuPathDB" id="FungiDB:AFUB_075220"/>
<dbReference type="HOGENOM" id="CLU_004624_4_0_1"/>
<dbReference type="OrthoDB" id="122320at5052"/>
<dbReference type="PhylomeDB" id="B0Y7W2"/>
<dbReference type="Proteomes" id="UP000001699">
    <property type="component" value="Unassembled WGS sequence"/>
</dbReference>
<dbReference type="GO" id="GO:0009986">
    <property type="term" value="C:cell surface"/>
    <property type="evidence" value="ECO:0007669"/>
    <property type="project" value="TreeGrafter"/>
</dbReference>
<dbReference type="GO" id="GO:0005576">
    <property type="term" value="C:extracellular region"/>
    <property type="evidence" value="ECO:0007669"/>
    <property type="project" value="TreeGrafter"/>
</dbReference>
<dbReference type="GO" id="GO:0005886">
    <property type="term" value="C:plasma membrane"/>
    <property type="evidence" value="ECO:0007669"/>
    <property type="project" value="UniProtKB-SubCell"/>
</dbReference>
<dbReference type="GO" id="GO:0004338">
    <property type="term" value="F:glucan exo-1,3-beta-glucosidase activity"/>
    <property type="evidence" value="ECO:0007669"/>
    <property type="project" value="UniProtKB-EC"/>
</dbReference>
<dbReference type="GO" id="GO:0071555">
    <property type="term" value="P:cell wall organization"/>
    <property type="evidence" value="ECO:0007669"/>
    <property type="project" value="UniProtKB-KW"/>
</dbReference>
<dbReference type="GO" id="GO:0009251">
    <property type="term" value="P:glucan catabolic process"/>
    <property type="evidence" value="ECO:0007669"/>
    <property type="project" value="TreeGrafter"/>
</dbReference>
<dbReference type="FunFam" id="3.20.20.80:FF:000033">
    <property type="entry name" value="Glucan 1,3-beta-glucosidase A"/>
    <property type="match status" value="1"/>
</dbReference>
<dbReference type="Gene3D" id="3.20.20.80">
    <property type="entry name" value="Glycosidases"/>
    <property type="match status" value="1"/>
</dbReference>
<dbReference type="InterPro" id="IPR001547">
    <property type="entry name" value="Glyco_hydro_5"/>
</dbReference>
<dbReference type="InterPro" id="IPR017853">
    <property type="entry name" value="Glycoside_hydrolase_SF"/>
</dbReference>
<dbReference type="InterPro" id="IPR050386">
    <property type="entry name" value="Glycosyl_hydrolase_5"/>
</dbReference>
<dbReference type="PANTHER" id="PTHR31297:SF34">
    <property type="entry name" value="GLUCAN 1,3-BETA-GLUCOSIDASE 2"/>
    <property type="match status" value="1"/>
</dbReference>
<dbReference type="PANTHER" id="PTHR31297">
    <property type="entry name" value="GLUCAN ENDO-1,6-BETA-GLUCOSIDASE B"/>
    <property type="match status" value="1"/>
</dbReference>
<dbReference type="Pfam" id="PF00150">
    <property type="entry name" value="Cellulase"/>
    <property type="match status" value="1"/>
</dbReference>
<dbReference type="SUPFAM" id="SSF51445">
    <property type="entry name" value="(Trans)glycosidases"/>
    <property type="match status" value="1"/>
</dbReference>
<gene>
    <name type="primary">exgD</name>
    <name type="ORF">AFUB_075220</name>
</gene>
<proteinExistence type="inferred from homology"/>
<reference key="1">
    <citation type="journal article" date="2008" name="PLoS Genet.">
        <title>Genomic islands in the pathogenic filamentous fungus Aspergillus fumigatus.</title>
        <authorList>
            <person name="Fedorova N.D."/>
            <person name="Khaldi N."/>
            <person name="Joardar V.S."/>
            <person name="Maiti R."/>
            <person name="Amedeo P."/>
            <person name="Anderson M.J."/>
            <person name="Crabtree J."/>
            <person name="Silva J.C."/>
            <person name="Badger J.H."/>
            <person name="Albarraq A."/>
            <person name="Angiuoli S."/>
            <person name="Bussey H."/>
            <person name="Bowyer P."/>
            <person name="Cotty P.J."/>
            <person name="Dyer P.S."/>
            <person name="Egan A."/>
            <person name="Galens K."/>
            <person name="Fraser-Liggett C.M."/>
            <person name="Haas B.J."/>
            <person name="Inman J.M."/>
            <person name="Kent R."/>
            <person name="Lemieux S."/>
            <person name="Malavazi I."/>
            <person name="Orvis J."/>
            <person name="Roemer T."/>
            <person name="Ronning C.M."/>
            <person name="Sundaram J.P."/>
            <person name="Sutton G."/>
            <person name="Turner G."/>
            <person name="Venter J.C."/>
            <person name="White O.R."/>
            <person name="Whitty B.R."/>
            <person name="Youngman P."/>
            <person name="Wolfe K.H."/>
            <person name="Goldman G.H."/>
            <person name="Wortman J.R."/>
            <person name="Jiang B."/>
            <person name="Denning D.W."/>
            <person name="Nierman W.C."/>
        </authorList>
    </citation>
    <scope>NUCLEOTIDE SEQUENCE [LARGE SCALE GENOMIC DNA]</scope>
    <source>
        <strain>CBS 144.89 / FGSC A1163 / CEA10</strain>
    </source>
</reference>